<accession>Q15QR9</accession>
<evidence type="ECO:0000255" key="1">
    <source>
        <dbReference type="HAMAP-Rule" id="MF_00096"/>
    </source>
</evidence>
<evidence type="ECO:0000256" key="2">
    <source>
        <dbReference type="SAM" id="MobiDB-lite"/>
    </source>
</evidence>
<proteinExistence type="inferred from homology"/>
<organism>
    <name type="scientific">Pseudoalteromonas atlantica (strain T6c / ATCC BAA-1087)</name>
    <dbReference type="NCBI Taxonomy" id="3042615"/>
    <lineage>
        <taxon>Bacteria</taxon>
        <taxon>Pseudomonadati</taxon>
        <taxon>Pseudomonadota</taxon>
        <taxon>Gammaproteobacteria</taxon>
        <taxon>Alteromonadales</taxon>
        <taxon>Alteromonadaceae</taxon>
        <taxon>Paraglaciecola</taxon>
    </lineage>
</organism>
<name>MUTS_PSEA6</name>
<feature type="chain" id="PRO_0000335203" description="DNA mismatch repair protein MutS">
    <location>
        <begin position="1"/>
        <end position="889"/>
    </location>
</feature>
<feature type="region of interest" description="Disordered" evidence="2">
    <location>
        <begin position="1"/>
        <end position="20"/>
    </location>
</feature>
<feature type="compositionally biased region" description="Low complexity" evidence="2">
    <location>
        <begin position="1"/>
        <end position="17"/>
    </location>
</feature>
<feature type="binding site" evidence="1">
    <location>
        <begin position="640"/>
        <end position="647"/>
    </location>
    <ligand>
        <name>ATP</name>
        <dbReference type="ChEBI" id="CHEBI:30616"/>
    </ligand>
</feature>
<protein>
    <recommendedName>
        <fullName evidence="1">DNA mismatch repair protein MutS</fullName>
    </recommendedName>
</protein>
<keyword id="KW-0067">ATP-binding</keyword>
<keyword id="KW-0227">DNA damage</keyword>
<keyword id="KW-0234">DNA repair</keyword>
<keyword id="KW-0238">DNA-binding</keyword>
<keyword id="KW-0547">Nucleotide-binding</keyword>
<gene>
    <name evidence="1" type="primary">mutS</name>
    <name type="ordered locus">Patl_3263</name>
</gene>
<comment type="function">
    <text evidence="1">This protein is involved in the repair of mismatches in DNA. It is possible that it carries out the mismatch recognition step. This protein has a weak ATPase activity.</text>
</comment>
<comment type="similarity">
    <text evidence="1">Belongs to the DNA mismatch repair MutS family.</text>
</comment>
<sequence>MPKTNSSAASTNANPSSLQQHTPMMQQYLKIKAEHPDILLFYRMGDFYELFFDDAKKAAELLDISLTARGKSGGNAIPMAGVPYHAVENYLARLVKMGQSVAIVEQVGDPATSKGPVERKVQRIVTPGTVSDEALLNDKQDSILAAVFCPTQKANQELIFGYATLDVTSGRFTLCELSGEEALAAELQRTNPVELLYPDDFAYSHLINQRKGLRRRPQWEFDLQTATNQLTSQFGTNELSGFGVQNHQVGICAAGCVMQYIKDTQRSALPHIDRIVLESHNDTVVMDAATRRNLELTFNLSGGIENTLASILDKTSTPMGSRLLQRWIHRPLTDVTVLKKRQRNIQGLMESPYTQLQSALKKIGDMQRVLARLALRSARPRDFARLRQAFALLPDIQHYLEHEISHTSESAQPSDLLHLAEKISQYPDFADLLERAVIEAPPVLIRDGGVIKEGYNEELDRLRELSKGATDYLEELELREKERTGIASLKVGYNRVHGYFIEVSRSQSDLVPVEYVRRQTLKNNERYIIPELKEHEDNVLSSQSRSLALEKRLYDELFDLLLPQLTQLMQSADALAELDVLTNLAERAESLDYHRPELCPQSGIHFSQGRHPVVEQVSDAPFIANPINVNPDRRMLVITGPNMGGKSTYMRQTALIVLMAYIGSYIPAQDAQIGPIDRIFTRIGASDDLASGRSTFMVEMTETANILNNATANSLVLMDEIGRGTSTYDGLSLAWACAEYLATKLQSFTLFATHYFELTGLADALPELANVHLDAVEHGESIRFMHAVQDGAANKSYGLQVAQLAGVPKLVVQAAKRKLHELETGDISKQGRQETSPVNTVYATEKVETQLDLLSQTSEAEDLLHSIQPDDLTPKQALDYLYQLKKLVR</sequence>
<reference key="1">
    <citation type="submission" date="2006-06" db="EMBL/GenBank/DDBJ databases">
        <title>Complete sequence of Pseudoalteromonas atlantica T6c.</title>
        <authorList>
            <consortium name="US DOE Joint Genome Institute"/>
            <person name="Copeland A."/>
            <person name="Lucas S."/>
            <person name="Lapidus A."/>
            <person name="Barry K."/>
            <person name="Detter J.C."/>
            <person name="Glavina del Rio T."/>
            <person name="Hammon N."/>
            <person name="Israni S."/>
            <person name="Dalin E."/>
            <person name="Tice H."/>
            <person name="Pitluck S."/>
            <person name="Saunders E."/>
            <person name="Brettin T."/>
            <person name="Bruce D."/>
            <person name="Han C."/>
            <person name="Tapia R."/>
            <person name="Gilna P."/>
            <person name="Schmutz J."/>
            <person name="Larimer F."/>
            <person name="Land M."/>
            <person name="Hauser L."/>
            <person name="Kyrpides N."/>
            <person name="Kim E."/>
            <person name="Karls A.C."/>
            <person name="Bartlett D."/>
            <person name="Higgins B.P."/>
            <person name="Richardson P."/>
        </authorList>
    </citation>
    <scope>NUCLEOTIDE SEQUENCE [LARGE SCALE GENOMIC DNA]</scope>
    <source>
        <strain>T6c / ATCC BAA-1087</strain>
    </source>
</reference>
<dbReference type="EMBL" id="CP000388">
    <property type="protein sequence ID" value="ABG41769.1"/>
    <property type="molecule type" value="Genomic_DNA"/>
</dbReference>
<dbReference type="RefSeq" id="WP_011575999.1">
    <property type="nucleotide sequence ID" value="NC_008228.1"/>
</dbReference>
<dbReference type="SMR" id="Q15QR9"/>
<dbReference type="STRING" id="342610.Patl_3263"/>
<dbReference type="KEGG" id="pat:Patl_3263"/>
<dbReference type="eggNOG" id="COG0249">
    <property type="taxonomic scope" value="Bacteria"/>
</dbReference>
<dbReference type="HOGENOM" id="CLU_002472_4_0_6"/>
<dbReference type="OrthoDB" id="9802448at2"/>
<dbReference type="Proteomes" id="UP000001981">
    <property type="component" value="Chromosome"/>
</dbReference>
<dbReference type="GO" id="GO:0005829">
    <property type="term" value="C:cytosol"/>
    <property type="evidence" value="ECO:0007669"/>
    <property type="project" value="TreeGrafter"/>
</dbReference>
<dbReference type="GO" id="GO:0005524">
    <property type="term" value="F:ATP binding"/>
    <property type="evidence" value="ECO:0007669"/>
    <property type="project" value="UniProtKB-UniRule"/>
</dbReference>
<dbReference type="GO" id="GO:0140664">
    <property type="term" value="F:ATP-dependent DNA damage sensor activity"/>
    <property type="evidence" value="ECO:0007669"/>
    <property type="project" value="InterPro"/>
</dbReference>
<dbReference type="GO" id="GO:0003684">
    <property type="term" value="F:damaged DNA binding"/>
    <property type="evidence" value="ECO:0007669"/>
    <property type="project" value="UniProtKB-UniRule"/>
</dbReference>
<dbReference type="GO" id="GO:0030983">
    <property type="term" value="F:mismatched DNA binding"/>
    <property type="evidence" value="ECO:0007669"/>
    <property type="project" value="InterPro"/>
</dbReference>
<dbReference type="GO" id="GO:0006298">
    <property type="term" value="P:mismatch repair"/>
    <property type="evidence" value="ECO:0007669"/>
    <property type="project" value="UniProtKB-UniRule"/>
</dbReference>
<dbReference type="CDD" id="cd03284">
    <property type="entry name" value="ABC_MutS1"/>
    <property type="match status" value="1"/>
</dbReference>
<dbReference type="FunFam" id="1.10.1420.10:FF:000002">
    <property type="entry name" value="DNA mismatch repair protein MutS"/>
    <property type="match status" value="1"/>
</dbReference>
<dbReference type="FunFam" id="3.40.1170.10:FF:000001">
    <property type="entry name" value="DNA mismatch repair protein MutS"/>
    <property type="match status" value="1"/>
</dbReference>
<dbReference type="FunFam" id="3.40.50.300:FF:000283">
    <property type="entry name" value="DNA mismatch repair protein MutS"/>
    <property type="match status" value="1"/>
</dbReference>
<dbReference type="Gene3D" id="1.10.1420.10">
    <property type="match status" value="2"/>
</dbReference>
<dbReference type="Gene3D" id="6.10.140.430">
    <property type="match status" value="1"/>
</dbReference>
<dbReference type="Gene3D" id="3.40.1170.10">
    <property type="entry name" value="DNA repair protein MutS, domain I"/>
    <property type="match status" value="1"/>
</dbReference>
<dbReference type="Gene3D" id="3.30.420.110">
    <property type="entry name" value="MutS, connector domain"/>
    <property type="match status" value="1"/>
</dbReference>
<dbReference type="Gene3D" id="3.40.50.300">
    <property type="entry name" value="P-loop containing nucleotide triphosphate hydrolases"/>
    <property type="match status" value="1"/>
</dbReference>
<dbReference type="HAMAP" id="MF_00096">
    <property type="entry name" value="MutS"/>
    <property type="match status" value="1"/>
</dbReference>
<dbReference type="InterPro" id="IPR005748">
    <property type="entry name" value="DNA_mismatch_repair_MutS"/>
</dbReference>
<dbReference type="InterPro" id="IPR007695">
    <property type="entry name" value="DNA_mismatch_repair_MutS-lik_N"/>
</dbReference>
<dbReference type="InterPro" id="IPR017261">
    <property type="entry name" value="DNA_mismatch_repair_MutS/MSH"/>
</dbReference>
<dbReference type="InterPro" id="IPR000432">
    <property type="entry name" value="DNA_mismatch_repair_MutS_C"/>
</dbReference>
<dbReference type="InterPro" id="IPR007861">
    <property type="entry name" value="DNA_mismatch_repair_MutS_clamp"/>
</dbReference>
<dbReference type="InterPro" id="IPR007696">
    <property type="entry name" value="DNA_mismatch_repair_MutS_core"/>
</dbReference>
<dbReference type="InterPro" id="IPR016151">
    <property type="entry name" value="DNA_mismatch_repair_MutS_N"/>
</dbReference>
<dbReference type="InterPro" id="IPR036187">
    <property type="entry name" value="DNA_mismatch_repair_MutS_sf"/>
</dbReference>
<dbReference type="InterPro" id="IPR007860">
    <property type="entry name" value="DNA_mmatch_repair_MutS_con_dom"/>
</dbReference>
<dbReference type="InterPro" id="IPR045076">
    <property type="entry name" value="MutS"/>
</dbReference>
<dbReference type="InterPro" id="IPR036678">
    <property type="entry name" value="MutS_con_dom_sf"/>
</dbReference>
<dbReference type="InterPro" id="IPR027417">
    <property type="entry name" value="P-loop_NTPase"/>
</dbReference>
<dbReference type="NCBIfam" id="TIGR01070">
    <property type="entry name" value="mutS1"/>
    <property type="match status" value="1"/>
</dbReference>
<dbReference type="NCBIfam" id="NF003810">
    <property type="entry name" value="PRK05399.1"/>
    <property type="match status" value="1"/>
</dbReference>
<dbReference type="PANTHER" id="PTHR11361:SF34">
    <property type="entry name" value="DNA MISMATCH REPAIR PROTEIN MSH1, MITOCHONDRIAL"/>
    <property type="match status" value="1"/>
</dbReference>
<dbReference type="PANTHER" id="PTHR11361">
    <property type="entry name" value="DNA MISMATCH REPAIR PROTEIN MUTS FAMILY MEMBER"/>
    <property type="match status" value="1"/>
</dbReference>
<dbReference type="Pfam" id="PF01624">
    <property type="entry name" value="MutS_I"/>
    <property type="match status" value="1"/>
</dbReference>
<dbReference type="Pfam" id="PF05188">
    <property type="entry name" value="MutS_II"/>
    <property type="match status" value="1"/>
</dbReference>
<dbReference type="Pfam" id="PF05192">
    <property type="entry name" value="MutS_III"/>
    <property type="match status" value="1"/>
</dbReference>
<dbReference type="Pfam" id="PF05190">
    <property type="entry name" value="MutS_IV"/>
    <property type="match status" value="1"/>
</dbReference>
<dbReference type="Pfam" id="PF00488">
    <property type="entry name" value="MutS_V"/>
    <property type="match status" value="1"/>
</dbReference>
<dbReference type="PIRSF" id="PIRSF037677">
    <property type="entry name" value="DNA_mis_repair_Msh6"/>
    <property type="match status" value="1"/>
</dbReference>
<dbReference type="SMART" id="SM00534">
    <property type="entry name" value="MUTSac"/>
    <property type="match status" value="1"/>
</dbReference>
<dbReference type="SMART" id="SM00533">
    <property type="entry name" value="MUTSd"/>
    <property type="match status" value="1"/>
</dbReference>
<dbReference type="SUPFAM" id="SSF55271">
    <property type="entry name" value="DNA repair protein MutS, domain I"/>
    <property type="match status" value="1"/>
</dbReference>
<dbReference type="SUPFAM" id="SSF53150">
    <property type="entry name" value="DNA repair protein MutS, domain II"/>
    <property type="match status" value="1"/>
</dbReference>
<dbReference type="SUPFAM" id="SSF48334">
    <property type="entry name" value="DNA repair protein MutS, domain III"/>
    <property type="match status" value="1"/>
</dbReference>
<dbReference type="SUPFAM" id="SSF52540">
    <property type="entry name" value="P-loop containing nucleoside triphosphate hydrolases"/>
    <property type="match status" value="1"/>
</dbReference>
<dbReference type="PROSITE" id="PS00486">
    <property type="entry name" value="DNA_MISMATCH_REPAIR_2"/>
    <property type="match status" value="1"/>
</dbReference>